<protein>
    <recommendedName>
        <fullName evidence="8">Annexin A8</fullName>
    </recommendedName>
    <alternativeName>
        <fullName evidence="4">Annexin VIII</fullName>
    </alternativeName>
    <alternativeName>
        <fullName evidence="6">Annexin-8</fullName>
    </alternativeName>
    <alternativeName>
        <fullName evidence="6">Vascular anticoagulant-beta</fullName>
        <shortName evidence="6">VAC-beta</shortName>
    </alternativeName>
</protein>
<gene>
    <name evidence="8" type="primary">ANXA8</name>
    <name type="synonym">ANX8</name>
</gene>
<evidence type="ECO:0000255" key="1">
    <source>
        <dbReference type="PROSITE-ProRule" id="PRU01245"/>
    </source>
</evidence>
<evidence type="ECO:0000269" key="2">
    <source>
    </source>
</evidence>
<evidence type="ECO:0000269" key="3">
    <source>
    </source>
</evidence>
<evidence type="ECO:0000303" key="4">
    <source>
    </source>
</evidence>
<evidence type="ECO:0000303" key="5">
    <source>
    </source>
</evidence>
<evidence type="ECO:0000303" key="6">
    <source>
    </source>
</evidence>
<evidence type="ECO:0000305" key="7"/>
<evidence type="ECO:0000312" key="8">
    <source>
        <dbReference type="HGNC" id="HGNC:546"/>
    </source>
</evidence>
<evidence type="ECO:0007829" key="9">
    <source>
        <dbReference type="PDB" id="1W3W"/>
    </source>
</evidence>
<evidence type="ECO:0007829" key="10">
    <source>
        <dbReference type="PDB" id="1W45"/>
    </source>
</evidence>
<sequence>MAWWKSWIEQEGVTVKSSSHFNPDPDAETLYKAMKGIGTNEQAIIDVLTKRSNTQRQQIAKSFKAQFGKDLTETLKSELSGKFERLIVALMYPPYRYEAKELHDAMKGLGTKEGVIIEILASRTKNQLREIMKAYEEDYGSSLEEDIQADTSGYLERILVCLLQGSRDDVSSFVDPGLALQDAQDLYAAGEKIRGTDEMKFITILCTRSATHLLRVFEEYEKIANKSIEDSIKSETHGSLEEAMLTVVKCTQNLHSYFAERLYYAMKGAGTRDGTLIRNIVSRSEIDLNLIKCHFKKMYGKTLSSMIMEDTSGDYKNALLSLVGSDP</sequence>
<name>ANXA8_HUMAN</name>
<reference key="1">
    <citation type="journal article" date="1989" name="Eur. J. Biochem.">
        <title>Vascular anticoagulant beta: a novel human Ca2+/phospholipid binding protein that inhibits coagulation and phospholipase A2 activity. Its molecular cloning, expression and comparison with VAC-alpha.</title>
        <authorList>
            <person name="Hauptmann R."/>
            <person name="Maurer-Fogy I."/>
            <person name="Krystek E."/>
            <person name="Bodo G."/>
            <person name="Andree H."/>
            <person name="Reutelingsperger C.P.M."/>
        </authorList>
    </citation>
    <scope>NUCLEOTIDE SEQUENCE [MRNA] (ISOFORM 1)</scope>
    <scope>VARIANTS ALA-6 AND ALA-177</scope>
    <source>
        <tissue>Placenta</tissue>
    </source>
</reference>
<reference key="2">
    <citation type="journal article" date="1992" name="Blood">
        <title>Specific expression of the annexin VIII gene in acute promyelocytic leukemia.</title>
        <authorList>
            <person name="Chang K.S."/>
            <person name="Wang G."/>
            <person name="Freireich E.J."/>
            <person name="Daly M."/>
            <person name="Naylor S.L."/>
            <person name="Trujillo J.M."/>
            <person name="Stass S.A."/>
        </authorList>
    </citation>
    <scope>NUCLEOTIDE SEQUENCE [MRNA] (ISOFORM 1)</scope>
</reference>
<reference key="3">
    <citation type="journal article" date="2004" name="Nat. Genet.">
        <title>Complete sequencing and characterization of 21,243 full-length human cDNAs.</title>
        <authorList>
            <person name="Ota T."/>
            <person name="Suzuki Y."/>
            <person name="Nishikawa T."/>
            <person name="Otsuki T."/>
            <person name="Sugiyama T."/>
            <person name="Irie R."/>
            <person name="Wakamatsu A."/>
            <person name="Hayashi K."/>
            <person name="Sato H."/>
            <person name="Nagai K."/>
            <person name="Kimura K."/>
            <person name="Makita H."/>
            <person name="Sekine M."/>
            <person name="Obayashi M."/>
            <person name="Nishi T."/>
            <person name="Shibahara T."/>
            <person name="Tanaka T."/>
            <person name="Ishii S."/>
            <person name="Yamamoto J."/>
            <person name="Saito K."/>
            <person name="Kawai Y."/>
            <person name="Isono Y."/>
            <person name="Nakamura Y."/>
            <person name="Nagahari K."/>
            <person name="Murakami K."/>
            <person name="Yasuda T."/>
            <person name="Iwayanagi T."/>
            <person name="Wagatsuma M."/>
            <person name="Shiratori A."/>
            <person name="Sudo H."/>
            <person name="Hosoiri T."/>
            <person name="Kaku Y."/>
            <person name="Kodaira H."/>
            <person name="Kondo H."/>
            <person name="Sugawara M."/>
            <person name="Takahashi M."/>
            <person name="Kanda K."/>
            <person name="Yokoi T."/>
            <person name="Furuya T."/>
            <person name="Kikkawa E."/>
            <person name="Omura Y."/>
            <person name="Abe K."/>
            <person name="Kamihara K."/>
            <person name="Katsuta N."/>
            <person name="Sato K."/>
            <person name="Tanikawa M."/>
            <person name="Yamazaki M."/>
            <person name="Ninomiya K."/>
            <person name="Ishibashi T."/>
            <person name="Yamashita H."/>
            <person name="Murakawa K."/>
            <person name="Fujimori K."/>
            <person name="Tanai H."/>
            <person name="Kimata M."/>
            <person name="Watanabe M."/>
            <person name="Hiraoka S."/>
            <person name="Chiba Y."/>
            <person name="Ishida S."/>
            <person name="Ono Y."/>
            <person name="Takiguchi S."/>
            <person name="Watanabe S."/>
            <person name="Yosida M."/>
            <person name="Hotuta T."/>
            <person name="Kusano J."/>
            <person name="Kanehori K."/>
            <person name="Takahashi-Fujii A."/>
            <person name="Hara H."/>
            <person name="Tanase T.-O."/>
            <person name="Nomura Y."/>
            <person name="Togiya S."/>
            <person name="Komai F."/>
            <person name="Hara R."/>
            <person name="Takeuchi K."/>
            <person name="Arita M."/>
            <person name="Imose N."/>
            <person name="Musashino K."/>
            <person name="Yuuki H."/>
            <person name="Oshima A."/>
            <person name="Sasaki N."/>
            <person name="Aotsuka S."/>
            <person name="Yoshikawa Y."/>
            <person name="Matsunawa H."/>
            <person name="Ichihara T."/>
            <person name="Shiohata N."/>
            <person name="Sano S."/>
            <person name="Moriya S."/>
            <person name="Momiyama H."/>
            <person name="Satoh N."/>
            <person name="Takami S."/>
            <person name="Terashima Y."/>
            <person name="Suzuki O."/>
            <person name="Nakagawa S."/>
            <person name="Senoh A."/>
            <person name="Mizoguchi H."/>
            <person name="Goto Y."/>
            <person name="Shimizu F."/>
            <person name="Wakebe H."/>
            <person name="Hishigaki H."/>
            <person name="Watanabe T."/>
            <person name="Sugiyama A."/>
            <person name="Takemoto M."/>
            <person name="Kawakami B."/>
            <person name="Yamazaki M."/>
            <person name="Watanabe K."/>
            <person name="Kumagai A."/>
            <person name="Itakura S."/>
            <person name="Fukuzumi Y."/>
            <person name="Fujimori Y."/>
            <person name="Komiyama M."/>
            <person name="Tashiro H."/>
            <person name="Tanigami A."/>
            <person name="Fujiwara T."/>
            <person name="Ono T."/>
            <person name="Yamada K."/>
            <person name="Fujii Y."/>
            <person name="Ozaki K."/>
            <person name="Hirao M."/>
            <person name="Ohmori Y."/>
            <person name="Kawabata A."/>
            <person name="Hikiji T."/>
            <person name="Kobatake N."/>
            <person name="Inagaki H."/>
            <person name="Ikema Y."/>
            <person name="Okamoto S."/>
            <person name="Okitani R."/>
            <person name="Kawakami T."/>
            <person name="Noguchi S."/>
            <person name="Itoh T."/>
            <person name="Shigeta K."/>
            <person name="Senba T."/>
            <person name="Matsumura K."/>
            <person name="Nakajima Y."/>
            <person name="Mizuno T."/>
            <person name="Morinaga M."/>
            <person name="Sasaki M."/>
            <person name="Togashi T."/>
            <person name="Oyama M."/>
            <person name="Hata H."/>
            <person name="Watanabe M."/>
            <person name="Komatsu T."/>
            <person name="Mizushima-Sugano J."/>
            <person name="Satoh T."/>
            <person name="Shirai Y."/>
            <person name="Takahashi Y."/>
            <person name="Nakagawa K."/>
            <person name="Okumura K."/>
            <person name="Nagase T."/>
            <person name="Nomura N."/>
            <person name="Kikuchi H."/>
            <person name="Masuho Y."/>
            <person name="Yamashita R."/>
            <person name="Nakai K."/>
            <person name="Yada T."/>
            <person name="Nakamura Y."/>
            <person name="Ohara O."/>
            <person name="Isogai T."/>
            <person name="Sugano S."/>
        </authorList>
    </citation>
    <scope>NUCLEOTIDE SEQUENCE [LARGE SCALE MRNA] (ISOFORMS 2 AND 3)</scope>
    <source>
        <tissue>Cervix</tissue>
        <tissue>Placenta</tissue>
    </source>
</reference>
<reference key="4">
    <citation type="journal article" date="2004" name="Nature">
        <title>The DNA sequence and comparative analysis of human chromosome 10.</title>
        <authorList>
            <person name="Deloukas P."/>
            <person name="Earthrowl M.E."/>
            <person name="Grafham D.V."/>
            <person name="Rubenfield M."/>
            <person name="French L."/>
            <person name="Steward C.A."/>
            <person name="Sims S.K."/>
            <person name="Jones M.C."/>
            <person name="Searle S."/>
            <person name="Scott C."/>
            <person name="Howe K."/>
            <person name="Hunt S.E."/>
            <person name="Andrews T.D."/>
            <person name="Gilbert J.G.R."/>
            <person name="Swarbreck D."/>
            <person name="Ashurst J.L."/>
            <person name="Taylor A."/>
            <person name="Battles J."/>
            <person name="Bird C.P."/>
            <person name="Ainscough R."/>
            <person name="Almeida J.P."/>
            <person name="Ashwell R.I.S."/>
            <person name="Ambrose K.D."/>
            <person name="Babbage A.K."/>
            <person name="Bagguley C.L."/>
            <person name="Bailey J."/>
            <person name="Banerjee R."/>
            <person name="Bates K."/>
            <person name="Beasley H."/>
            <person name="Bray-Allen S."/>
            <person name="Brown A.J."/>
            <person name="Brown J.Y."/>
            <person name="Burford D.C."/>
            <person name="Burrill W."/>
            <person name="Burton J."/>
            <person name="Cahill P."/>
            <person name="Camire D."/>
            <person name="Carter N.P."/>
            <person name="Chapman J.C."/>
            <person name="Clark S.Y."/>
            <person name="Clarke G."/>
            <person name="Clee C.M."/>
            <person name="Clegg S."/>
            <person name="Corby N."/>
            <person name="Coulson A."/>
            <person name="Dhami P."/>
            <person name="Dutta I."/>
            <person name="Dunn M."/>
            <person name="Faulkner L."/>
            <person name="Frankish A."/>
            <person name="Frankland J.A."/>
            <person name="Garner P."/>
            <person name="Garnett J."/>
            <person name="Gribble S."/>
            <person name="Griffiths C."/>
            <person name="Grocock R."/>
            <person name="Gustafson E."/>
            <person name="Hammond S."/>
            <person name="Harley J.L."/>
            <person name="Hart E."/>
            <person name="Heath P.D."/>
            <person name="Ho T.P."/>
            <person name="Hopkins B."/>
            <person name="Horne J."/>
            <person name="Howden P.J."/>
            <person name="Huckle E."/>
            <person name="Hynds C."/>
            <person name="Johnson C."/>
            <person name="Johnson D."/>
            <person name="Kana A."/>
            <person name="Kay M."/>
            <person name="Kimberley A.M."/>
            <person name="Kershaw J.K."/>
            <person name="Kokkinaki M."/>
            <person name="Laird G.K."/>
            <person name="Lawlor S."/>
            <person name="Lee H.M."/>
            <person name="Leongamornlert D.A."/>
            <person name="Laird G."/>
            <person name="Lloyd C."/>
            <person name="Lloyd D.M."/>
            <person name="Loveland J."/>
            <person name="Lovell J."/>
            <person name="McLaren S."/>
            <person name="McLay K.E."/>
            <person name="McMurray A."/>
            <person name="Mashreghi-Mohammadi M."/>
            <person name="Matthews L."/>
            <person name="Milne S."/>
            <person name="Nickerson T."/>
            <person name="Nguyen M."/>
            <person name="Overton-Larty E."/>
            <person name="Palmer S.A."/>
            <person name="Pearce A.V."/>
            <person name="Peck A.I."/>
            <person name="Pelan S."/>
            <person name="Phillimore B."/>
            <person name="Porter K."/>
            <person name="Rice C.M."/>
            <person name="Rogosin A."/>
            <person name="Ross M.T."/>
            <person name="Sarafidou T."/>
            <person name="Sehra H.K."/>
            <person name="Shownkeen R."/>
            <person name="Skuce C.D."/>
            <person name="Smith M."/>
            <person name="Standring L."/>
            <person name="Sycamore N."/>
            <person name="Tester J."/>
            <person name="Thorpe A."/>
            <person name="Torcasso W."/>
            <person name="Tracey A."/>
            <person name="Tromans A."/>
            <person name="Tsolas J."/>
            <person name="Wall M."/>
            <person name="Walsh J."/>
            <person name="Wang H."/>
            <person name="Weinstock K."/>
            <person name="West A.P."/>
            <person name="Willey D.L."/>
            <person name="Whitehead S.L."/>
            <person name="Wilming L."/>
            <person name="Wray P.W."/>
            <person name="Young L."/>
            <person name="Chen Y."/>
            <person name="Lovering R.C."/>
            <person name="Moschonas N.K."/>
            <person name="Siebert R."/>
            <person name="Fechtel K."/>
            <person name="Bentley D."/>
            <person name="Durbin R.M."/>
            <person name="Hubbard T."/>
            <person name="Doucette-Stamm L."/>
            <person name="Beck S."/>
            <person name="Smith D.R."/>
            <person name="Rogers J."/>
        </authorList>
    </citation>
    <scope>NUCLEOTIDE SEQUENCE [LARGE SCALE GENOMIC DNA]</scope>
</reference>
<reference key="5">
    <citation type="journal article" date="2004" name="Genome Res.">
        <title>The status, quality, and expansion of the NIH full-length cDNA project: the Mammalian Gene Collection (MGC).</title>
        <authorList>
            <consortium name="The MGC Project Team"/>
        </authorList>
    </citation>
    <scope>NUCLEOTIDE SEQUENCE [LARGE SCALE MRNA] (ISOFORM 1)</scope>
    <scope>VARIANT ALA-177</scope>
    <source>
        <tissue>Lung</tissue>
        <tissue>Pancreas</tissue>
    </source>
</reference>
<reference key="6">
    <citation type="journal article" date="2011" name="BMC Syst. Biol.">
        <title>Initial characterization of the human central proteome.</title>
        <authorList>
            <person name="Burkard T.R."/>
            <person name="Planyavsky M."/>
            <person name="Kaupe I."/>
            <person name="Breitwieser F.P."/>
            <person name="Buerckstuemmer T."/>
            <person name="Bennett K.L."/>
            <person name="Superti-Furga G."/>
            <person name="Colinge J."/>
        </authorList>
    </citation>
    <scope>IDENTIFICATION BY MASS SPECTROMETRY [LARGE SCALE ANALYSIS]</scope>
</reference>
<reference key="7">
    <citation type="journal article" date="2005" name="J. Mol. Biol.">
        <title>The crystal structure of annexin A8 is similar to that of annexin A3.</title>
        <authorList>
            <person name="Rety S."/>
            <person name="Sopkova-de Oliveira Santos J."/>
            <person name="Dreyfuss L."/>
            <person name="Blondeau K."/>
            <person name="Hofbauerova K."/>
            <person name="Raguenes-Nicol C."/>
            <person name="Kerboeuf D."/>
            <person name="Renouard M."/>
            <person name="Russo-Marie F."/>
            <person name="Lewit-Bentley A."/>
        </authorList>
    </citation>
    <scope>X-RAY CRYSTALLOGRAPHY (1.99 ANGSTROMS)</scope>
    <scope>CALCIUM-BINDING SITES</scope>
</reference>
<accession>P13928</accession>
<accession>A6NDE6</accession>
<accession>A6NLM1</accession>
<accession>B4DKI1</accession>
<accession>B4DTC9</accession>
<accession>Q5T2P8</accession>
<accession>Q5VTM4</accession>
<accession>Q6GMY3</accession>
<accession>Q9BT34</accession>
<keyword id="KW-0002">3D-structure</keyword>
<keyword id="KW-0025">Alternative splicing</keyword>
<keyword id="KW-0041">Annexin</keyword>
<keyword id="KW-0094">Blood coagulation</keyword>
<keyword id="KW-0106">Calcium</keyword>
<keyword id="KW-0111">Calcium/phospholipid-binding</keyword>
<keyword id="KW-0356">Hemostasis</keyword>
<keyword id="KW-0479">Metal-binding</keyword>
<keyword id="KW-1267">Proteomics identification</keyword>
<keyword id="KW-1185">Reference proteome</keyword>
<keyword id="KW-0677">Repeat</keyword>
<proteinExistence type="evidence at protein level"/>
<organism>
    <name type="scientific">Homo sapiens</name>
    <name type="common">Human</name>
    <dbReference type="NCBI Taxonomy" id="9606"/>
    <lineage>
        <taxon>Eukaryota</taxon>
        <taxon>Metazoa</taxon>
        <taxon>Chordata</taxon>
        <taxon>Craniata</taxon>
        <taxon>Vertebrata</taxon>
        <taxon>Euteleostomi</taxon>
        <taxon>Mammalia</taxon>
        <taxon>Eutheria</taxon>
        <taxon>Euarchontoglires</taxon>
        <taxon>Primates</taxon>
        <taxon>Haplorrhini</taxon>
        <taxon>Catarrhini</taxon>
        <taxon>Hominidae</taxon>
        <taxon>Homo</taxon>
    </lineage>
</organism>
<dbReference type="EMBL" id="X16662">
    <property type="protein sequence ID" value="CAA34650.1"/>
    <property type="molecule type" value="mRNA"/>
</dbReference>
<dbReference type="EMBL" id="M81844">
    <property type="protein sequence ID" value="AAB46383.1"/>
    <property type="molecule type" value="mRNA"/>
</dbReference>
<dbReference type="EMBL" id="AK296573">
    <property type="protein sequence ID" value="BAG59193.1"/>
    <property type="molecule type" value="mRNA"/>
</dbReference>
<dbReference type="EMBL" id="AK300158">
    <property type="protein sequence ID" value="BAG61941.1"/>
    <property type="molecule type" value="mRNA"/>
</dbReference>
<dbReference type="EMBL" id="AL391137">
    <property type="protein sequence ID" value="CAI12203.1"/>
    <property type="molecule type" value="Genomic_DNA"/>
</dbReference>
<dbReference type="EMBL" id="AL591684">
    <property type="status" value="NOT_ANNOTATED_CDS"/>
    <property type="molecule type" value="Genomic_DNA"/>
</dbReference>
<dbReference type="EMBL" id="BC004376">
    <property type="protein sequence ID" value="AAH04376.1"/>
    <property type="molecule type" value="mRNA"/>
</dbReference>
<dbReference type="EMBL" id="BC073755">
    <property type="protein sequence ID" value="AAH73755.1"/>
    <property type="molecule type" value="mRNA"/>
</dbReference>
<dbReference type="CCDS" id="CCDS73121.1">
    <molecule id="P13928-3"/>
</dbReference>
<dbReference type="CCDS" id="CCDS73122.1">
    <molecule id="P13928-1"/>
</dbReference>
<dbReference type="PIR" id="S06476">
    <property type="entry name" value="LUHU8"/>
</dbReference>
<dbReference type="RefSeq" id="NP_001035173.1">
    <molecule id="P13928-1"/>
    <property type="nucleotide sequence ID" value="NM_001040084.3"/>
</dbReference>
<dbReference type="RefSeq" id="NP_001092315.2">
    <property type="nucleotide sequence ID" value="NM_001098845.2"/>
</dbReference>
<dbReference type="RefSeq" id="NP_001258631.1">
    <property type="nucleotide sequence ID" value="NM_001271702.1"/>
</dbReference>
<dbReference type="RefSeq" id="NP_001258632.1">
    <molecule id="P13928-3"/>
    <property type="nucleotide sequence ID" value="NM_001271703.2"/>
</dbReference>
<dbReference type="PDB" id="1W3W">
    <property type="method" value="X-ray"/>
    <property type="resolution" value="1.99 A"/>
    <property type="chains" value="A=1-327"/>
</dbReference>
<dbReference type="PDB" id="1W45">
    <property type="method" value="X-ray"/>
    <property type="resolution" value="2.51 A"/>
    <property type="chains" value="A/B=1-327"/>
</dbReference>
<dbReference type="PDBsum" id="1W3W"/>
<dbReference type="PDBsum" id="1W45"/>
<dbReference type="SMR" id="P13928"/>
<dbReference type="BioGRID" id="575558">
    <property type="interactions" value="74"/>
</dbReference>
<dbReference type="BioGRID" id="608549">
    <property type="interactions" value="20"/>
</dbReference>
<dbReference type="FunCoup" id="P13928">
    <property type="interactions" value="188"/>
</dbReference>
<dbReference type="IntAct" id="P13928">
    <property type="interactions" value="66"/>
</dbReference>
<dbReference type="MINT" id="P13928"/>
<dbReference type="iPTMnet" id="P13928"/>
<dbReference type="PhosphoSitePlus" id="P13928"/>
<dbReference type="SwissPalm" id="P13928"/>
<dbReference type="BioMuta" id="ANXA8"/>
<dbReference type="DMDM" id="215274181"/>
<dbReference type="jPOST" id="P13928"/>
<dbReference type="MassIVE" id="P13928"/>
<dbReference type="PeptideAtlas" id="P13928"/>
<dbReference type="ProteomicsDB" id="5097"/>
<dbReference type="ProteomicsDB" id="52998">
    <molecule id="P13928-1"/>
</dbReference>
<dbReference type="Antibodypedia" id="72811">
    <property type="antibodies" value="144 antibodies from 27 providers"/>
</dbReference>
<dbReference type="DNASU" id="244"/>
<dbReference type="Ensembl" id="ENST00000577813.1">
    <molecule id="P13928-2"/>
    <property type="protein sequence ID" value="ENSP00000463244.1"/>
    <property type="gene ID" value="ENSG00000265190.7"/>
</dbReference>
<dbReference type="Ensembl" id="ENST00000583911.5">
    <molecule id="P13928-3"/>
    <property type="protein sequence ID" value="ENSP00000463091.1"/>
    <property type="gene ID" value="ENSG00000265190.7"/>
</dbReference>
<dbReference type="Ensembl" id="ENST00000585281.6">
    <molecule id="P13928-1"/>
    <property type="protein sequence ID" value="ENSP00000462880.1"/>
    <property type="gene ID" value="ENSG00000265190.7"/>
</dbReference>
<dbReference type="GeneID" id="653145"/>
<dbReference type="GeneID" id="728113"/>
<dbReference type="KEGG" id="hsa:653145"/>
<dbReference type="KEGG" id="hsa:728113"/>
<dbReference type="MANE-Select" id="ENST00000585281.6">
    <property type="protein sequence ID" value="ENSP00000462880.1"/>
    <property type="RefSeq nucleotide sequence ID" value="NM_001040084.3"/>
    <property type="RefSeq protein sequence ID" value="NP_001035173.1"/>
</dbReference>
<dbReference type="UCSC" id="uc001jev.5">
    <molecule id="P13928-1"/>
    <property type="organism name" value="human"/>
</dbReference>
<dbReference type="AGR" id="HGNC:23334"/>
<dbReference type="AGR" id="HGNC:546"/>
<dbReference type="CTD" id="653145"/>
<dbReference type="CTD" id="728113"/>
<dbReference type="DisGeNET" id="653145"/>
<dbReference type="DisGeNET" id="728113"/>
<dbReference type="GeneCards" id="ANXA8"/>
<dbReference type="HGNC" id="HGNC:546">
    <property type="gene designation" value="ANXA8"/>
</dbReference>
<dbReference type="HPA" id="ENSG00000265190">
    <property type="expression patterns" value="Tissue enhanced (esophagus, skin, vagina)"/>
</dbReference>
<dbReference type="MIM" id="602396">
    <property type="type" value="gene"/>
</dbReference>
<dbReference type="neXtProt" id="NX_P13928"/>
<dbReference type="OpenTargets" id="ENSG00000265190"/>
<dbReference type="PharmGKB" id="PA134881914"/>
<dbReference type="PharmGKB" id="PA24836"/>
<dbReference type="VEuPathDB" id="HostDB:ENSG00000265190"/>
<dbReference type="GeneTree" id="ENSGT00940000161044"/>
<dbReference type="HOGENOM" id="CLU_025300_2_3_1"/>
<dbReference type="InParanoid" id="P13928"/>
<dbReference type="OMA" id="LTHRSCE"/>
<dbReference type="OrthoDB" id="37886at2759"/>
<dbReference type="PAN-GO" id="P13928">
    <property type="GO annotations" value="6 GO annotations based on evolutionary models"/>
</dbReference>
<dbReference type="PhylomeDB" id="P13928"/>
<dbReference type="TreeFam" id="TF105452"/>
<dbReference type="PathwayCommons" id="P13928"/>
<dbReference type="SignaLink" id="P13928"/>
<dbReference type="BioGRID-ORCS" id="653145">
    <property type="hits" value="6 hits in 1022 CRISPR screens"/>
</dbReference>
<dbReference type="BioGRID-ORCS" id="728113">
    <property type="hits" value="45 hits in 1036 CRISPR screens"/>
</dbReference>
<dbReference type="ChiTaRS" id="ANXA8">
    <property type="organism name" value="human"/>
</dbReference>
<dbReference type="EvolutionaryTrace" id="P13928"/>
<dbReference type="Pharos" id="P13928">
    <property type="development level" value="Tbio"/>
</dbReference>
<dbReference type="PRO" id="PR:P13928"/>
<dbReference type="Proteomes" id="UP000005640">
    <property type="component" value="Chromosome 10"/>
</dbReference>
<dbReference type="RNAct" id="P13928">
    <property type="molecule type" value="protein"/>
</dbReference>
<dbReference type="Bgee" id="ENSG00000265190">
    <property type="expression patterns" value="Expressed in skin of abdomen and 90 other cell types or tissues"/>
</dbReference>
<dbReference type="ExpressionAtlas" id="P13928">
    <property type="expression patterns" value="baseline and differential"/>
</dbReference>
<dbReference type="GO" id="GO:0062023">
    <property type="term" value="C:collagen-containing extracellular matrix"/>
    <property type="evidence" value="ECO:0007005"/>
    <property type="project" value="BHF-UCL"/>
</dbReference>
<dbReference type="GO" id="GO:0005737">
    <property type="term" value="C:cytoplasm"/>
    <property type="evidence" value="ECO:0000318"/>
    <property type="project" value="GO_Central"/>
</dbReference>
<dbReference type="GO" id="GO:0005829">
    <property type="term" value="C:cytosol"/>
    <property type="evidence" value="ECO:0000314"/>
    <property type="project" value="UniProtKB"/>
</dbReference>
<dbReference type="GO" id="GO:0031902">
    <property type="term" value="C:late endosome membrane"/>
    <property type="evidence" value="ECO:0000314"/>
    <property type="project" value="UniProtKB"/>
</dbReference>
<dbReference type="GO" id="GO:0005886">
    <property type="term" value="C:plasma membrane"/>
    <property type="evidence" value="ECO:0000314"/>
    <property type="project" value="UniProtKB"/>
</dbReference>
<dbReference type="GO" id="GO:0042383">
    <property type="term" value="C:sarcolemma"/>
    <property type="evidence" value="ECO:0000318"/>
    <property type="project" value="GO_Central"/>
</dbReference>
<dbReference type="GO" id="GO:0012506">
    <property type="term" value="C:vesicle membrane"/>
    <property type="evidence" value="ECO:0000318"/>
    <property type="project" value="GO_Central"/>
</dbReference>
<dbReference type="GO" id="GO:0051015">
    <property type="term" value="F:actin filament binding"/>
    <property type="evidence" value="ECO:0000314"/>
    <property type="project" value="UniProtKB"/>
</dbReference>
<dbReference type="GO" id="GO:0005509">
    <property type="term" value="F:calcium ion binding"/>
    <property type="evidence" value="ECO:0000314"/>
    <property type="project" value="UniProtKB"/>
</dbReference>
<dbReference type="GO" id="GO:0005544">
    <property type="term" value="F:calcium-dependent phospholipid binding"/>
    <property type="evidence" value="ECO:0000314"/>
    <property type="project" value="UniProtKB"/>
</dbReference>
<dbReference type="GO" id="GO:0005547">
    <property type="term" value="F:phosphatidylinositol-3,4,5-trisphosphate binding"/>
    <property type="evidence" value="ECO:0000314"/>
    <property type="project" value="UniProtKB"/>
</dbReference>
<dbReference type="GO" id="GO:0043325">
    <property type="term" value="F:phosphatidylinositol-3,4-bisphosphate binding"/>
    <property type="evidence" value="ECO:0000314"/>
    <property type="project" value="UniProtKB"/>
</dbReference>
<dbReference type="GO" id="GO:0005546">
    <property type="term" value="F:phosphatidylinositol-4,5-bisphosphate binding"/>
    <property type="evidence" value="ECO:0000314"/>
    <property type="project" value="UniProtKB"/>
</dbReference>
<dbReference type="GO" id="GO:0001786">
    <property type="term" value="F:phosphatidylserine binding"/>
    <property type="evidence" value="ECO:0000318"/>
    <property type="project" value="GO_Central"/>
</dbReference>
<dbReference type="GO" id="GO:0019834">
    <property type="term" value="F:phospholipase A2 inhibitor activity"/>
    <property type="evidence" value="ECO:0000314"/>
    <property type="project" value="UniProtKB"/>
</dbReference>
<dbReference type="GO" id="GO:0007596">
    <property type="term" value="P:blood coagulation"/>
    <property type="evidence" value="ECO:0007669"/>
    <property type="project" value="UniProtKB-KW"/>
</dbReference>
<dbReference type="GO" id="GO:0016197">
    <property type="term" value="P:endosomal transport"/>
    <property type="evidence" value="ECO:0000315"/>
    <property type="project" value="UniProtKB"/>
</dbReference>
<dbReference type="GO" id="GO:0007032">
    <property type="term" value="P:endosome organization"/>
    <property type="evidence" value="ECO:0000315"/>
    <property type="project" value="UniProtKB"/>
</dbReference>
<dbReference type="FunFam" id="1.10.220.10:FF:000001">
    <property type="entry name" value="Annexin"/>
    <property type="match status" value="1"/>
</dbReference>
<dbReference type="FunFam" id="1.10.220.10:FF:000002">
    <property type="entry name" value="Annexin"/>
    <property type="match status" value="1"/>
</dbReference>
<dbReference type="FunFam" id="1.10.220.10:FF:000003">
    <property type="entry name" value="Annexin"/>
    <property type="match status" value="1"/>
</dbReference>
<dbReference type="FunFam" id="1.10.220.10:FF:000004">
    <property type="entry name" value="Annexin"/>
    <property type="match status" value="1"/>
</dbReference>
<dbReference type="Gene3D" id="1.10.220.10">
    <property type="entry name" value="Annexin"/>
    <property type="match status" value="4"/>
</dbReference>
<dbReference type="InterPro" id="IPR001464">
    <property type="entry name" value="Annexin"/>
</dbReference>
<dbReference type="InterPro" id="IPR018502">
    <property type="entry name" value="Annexin_repeat"/>
</dbReference>
<dbReference type="InterPro" id="IPR018252">
    <property type="entry name" value="Annexin_repeat_CS"/>
</dbReference>
<dbReference type="InterPro" id="IPR037104">
    <property type="entry name" value="Annexin_sf"/>
</dbReference>
<dbReference type="InterPro" id="IPR009115">
    <property type="entry name" value="ANX8"/>
</dbReference>
<dbReference type="PANTHER" id="PTHR10502">
    <property type="entry name" value="ANNEXIN"/>
    <property type="match status" value="1"/>
</dbReference>
<dbReference type="PANTHER" id="PTHR10502:SF133">
    <property type="entry name" value="ANNEXIN A8-RELATED"/>
    <property type="match status" value="1"/>
</dbReference>
<dbReference type="Pfam" id="PF00191">
    <property type="entry name" value="Annexin"/>
    <property type="match status" value="4"/>
</dbReference>
<dbReference type="PRINTS" id="PR00196">
    <property type="entry name" value="ANNEXIN"/>
</dbReference>
<dbReference type="PRINTS" id="PR01808">
    <property type="entry name" value="ANNEXINVIII"/>
</dbReference>
<dbReference type="SMART" id="SM00335">
    <property type="entry name" value="ANX"/>
    <property type="match status" value="4"/>
</dbReference>
<dbReference type="SUPFAM" id="SSF47874">
    <property type="entry name" value="Annexin"/>
    <property type="match status" value="1"/>
</dbReference>
<dbReference type="PROSITE" id="PS00223">
    <property type="entry name" value="ANNEXIN_1"/>
    <property type="match status" value="4"/>
</dbReference>
<dbReference type="PROSITE" id="PS51897">
    <property type="entry name" value="ANNEXIN_2"/>
    <property type="match status" value="4"/>
</dbReference>
<feature type="chain" id="PRO_0000067503" description="Annexin A8">
    <location>
        <begin position="1"/>
        <end position="327"/>
    </location>
</feature>
<feature type="repeat" description="Annexin 1" evidence="1">
    <location>
        <begin position="21"/>
        <end position="92"/>
    </location>
</feature>
<feature type="repeat" description="Annexin 2" evidence="1">
    <location>
        <begin position="93"/>
        <end position="164"/>
    </location>
</feature>
<feature type="repeat" description="Annexin 3" evidence="1">
    <location>
        <begin position="177"/>
        <end position="249"/>
    </location>
</feature>
<feature type="repeat" description="Annexin 4" evidence="1">
    <location>
        <begin position="253"/>
        <end position="324"/>
    </location>
</feature>
<feature type="binding site">
    <location>
        <position position="266"/>
    </location>
    <ligand>
        <name>Ca(2+)</name>
        <dbReference type="ChEBI" id="CHEBI:29108"/>
    </ligand>
</feature>
<feature type="binding site">
    <location>
        <position position="268"/>
    </location>
    <ligand>
        <name>Ca(2+)</name>
        <dbReference type="ChEBI" id="CHEBI:29108"/>
    </ligand>
</feature>
<feature type="binding site">
    <location>
        <position position="270"/>
    </location>
    <ligand>
        <name>Ca(2+)</name>
        <dbReference type="ChEBI" id="CHEBI:29108"/>
    </ligand>
</feature>
<feature type="binding site">
    <location>
        <position position="310"/>
    </location>
    <ligand>
        <name>Ca(2+)</name>
        <dbReference type="ChEBI" id="CHEBI:29108"/>
    </ligand>
</feature>
<feature type="splice variant" id="VSP_057805" description="In isoform 3." evidence="5">
    <location>
        <begin position="8"/>
        <end position="69"/>
    </location>
</feature>
<feature type="splice variant" id="VSP_056397" description="In isoform 2." evidence="5">
    <original>DYGS</original>
    <variation>GQQG</variation>
    <location>
        <begin position="138"/>
        <end position="141"/>
    </location>
</feature>
<feature type="splice variant" id="VSP_056398" description="In isoform 2." evidence="5">
    <location>
        <begin position="142"/>
        <end position="327"/>
    </location>
</feature>
<feature type="sequence variant" id="VAR_000604" description="In dbSNP:rs3870786." evidence="3">
    <original>S</original>
    <variation>A</variation>
    <location>
        <position position="6"/>
    </location>
</feature>
<feature type="sequence variant" id="VAR_030630" description="In dbSNP:rs75345346." evidence="2 3">
    <original>G</original>
    <variation>A</variation>
    <location>
        <position position="177"/>
    </location>
</feature>
<feature type="sequence conflict" description="In Ref. 3; BAG59193 and 4; CAI12203." evidence="7" ref="3 4">
    <original>K</original>
    <variation>Q</variation>
    <location>
        <position position="32"/>
    </location>
</feature>
<feature type="sequence conflict" description="In Ref. 2; AAB46383." evidence="7" ref="2">
    <original>Q</original>
    <variation>T</variation>
    <location>
        <position position="58"/>
    </location>
</feature>
<feature type="sequence conflict" description="In Ref. 2; AAB46383." evidence="7" ref="2">
    <original>F</original>
    <variation>L</variation>
    <location>
        <position position="83"/>
    </location>
</feature>
<feature type="sequence conflict" description="In Ref. 2; AAB46383." evidence="7" ref="2">
    <original>R</original>
    <variation>S</variation>
    <location>
        <position position="157"/>
    </location>
</feature>
<feature type="sequence conflict" description="In Ref. 2; AAB46383." evidence="7" ref="2">
    <original>GD</original>
    <variation>RY</variation>
    <location>
        <begin position="313"/>
        <end position="314"/>
    </location>
</feature>
<feature type="helix" evidence="9">
    <location>
        <begin position="24"/>
        <end position="34"/>
    </location>
</feature>
<feature type="strand" evidence="9">
    <location>
        <begin position="35"/>
        <end position="38"/>
    </location>
</feature>
<feature type="helix" evidence="9">
    <location>
        <begin position="41"/>
        <end position="48"/>
    </location>
</feature>
<feature type="helix" evidence="9">
    <location>
        <begin position="53"/>
        <end position="67"/>
    </location>
</feature>
<feature type="helix" evidence="9">
    <location>
        <begin position="71"/>
        <end position="78"/>
    </location>
</feature>
<feature type="helix" evidence="9">
    <location>
        <begin position="81"/>
        <end position="91"/>
    </location>
</feature>
<feature type="helix" evidence="9">
    <location>
        <begin position="96"/>
        <end position="107"/>
    </location>
</feature>
<feature type="strand" evidence="9">
    <location>
        <begin position="108"/>
        <end position="110"/>
    </location>
</feature>
<feature type="helix" evidence="9">
    <location>
        <begin position="113"/>
        <end position="122"/>
    </location>
</feature>
<feature type="helix" evidence="9">
    <location>
        <begin position="125"/>
        <end position="139"/>
    </location>
</feature>
<feature type="helix" evidence="9">
    <location>
        <begin position="143"/>
        <end position="150"/>
    </location>
</feature>
<feature type="helix" evidence="9">
    <location>
        <begin position="153"/>
        <end position="163"/>
    </location>
</feature>
<feature type="strand" evidence="10">
    <location>
        <begin position="167"/>
        <end position="170"/>
    </location>
</feature>
<feature type="helix" evidence="9">
    <location>
        <begin position="176"/>
        <end position="191"/>
    </location>
</feature>
<feature type="strand" evidence="9">
    <location>
        <begin position="193"/>
        <end position="195"/>
    </location>
</feature>
<feature type="helix" evidence="9">
    <location>
        <begin position="198"/>
        <end position="207"/>
    </location>
</feature>
<feature type="helix" evidence="9">
    <location>
        <begin position="210"/>
        <end position="224"/>
    </location>
</feature>
<feature type="helix" evidence="9">
    <location>
        <begin position="228"/>
        <end position="235"/>
    </location>
</feature>
<feature type="helix" evidence="9">
    <location>
        <begin position="238"/>
        <end position="252"/>
    </location>
</feature>
<feature type="helix" evidence="9">
    <location>
        <begin position="254"/>
        <end position="266"/>
    </location>
</feature>
<feature type="strand" evidence="9">
    <location>
        <begin position="267"/>
        <end position="270"/>
    </location>
</feature>
<feature type="helix" evidence="9">
    <location>
        <begin position="273"/>
        <end position="283"/>
    </location>
</feature>
<feature type="turn" evidence="9">
    <location>
        <begin position="284"/>
        <end position="286"/>
    </location>
</feature>
<feature type="helix" evidence="9">
    <location>
        <begin position="288"/>
        <end position="299"/>
    </location>
</feature>
<feature type="helix" evidence="9">
    <location>
        <begin position="303"/>
        <end position="310"/>
    </location>
</feature>
<feature type="helix" evidence="9">
    <location>
        <begin position="313"/>
        <end position="323"/>
    </location>
</feature>
<comment type="function">
    <text>This protein is an anticoagulant protein that acts as an indirect inhibitor of the thromboplastin-specific complex, which is involved in the blood coagulation cascade.</text>
</comment>
<comment type="interaction">
    <interactant intactId="EBI-2556915">
        <id>P13928</id>
    </interactant>
    <interactant intactId="EBI-367510">
        <id>P68133</id>
        <label>ACTA1</label>
    </interactant>
    <organismsDiffer>false</organismsDiffer>
    <experiments>2</experiments>
</comment>
<comment type="interaction">
    <interactant intactId="EBI-2556915">
        <id>P13928</id>
    </interactant>
    <interactant intactId="EBI-930964">
        <id>P54253</id>
        <label>ATXN1</label>
    </interactant>
    <organismsDiffer>false</organismsDiffer>
    <experiments>6</experiments>
</comment>
<comment type="interaction">
    <interactant intactId="EBI-2556915">
        <id>P13928</id>
    </interactant>
    <interactant intactId="EBI-10988864">
        <id>P46379-2</id>
        <label>BAG6</label>
    </interactant>
    <organismsDiffer>false</organismsDiffer>
    <experiments>3</experiments>
</comment>
<comment type="interaction">
    <interactant intactId="EBI-2556915">
        <id>P13928</id>
    </interactant>
    <interactant intactId="EBI-21553822">
        <id>Q96A83-2</id>
        <label>COL26A1</label>
    </interactant>
    <organismsDiffer>false</organismsDiffer>
    <experiments>3</experiments>
</comment>
<comment type="interaction">
    <interactant intactId="EBI-2556915">
        <id>P13928</id>
    </interactant>
    <interactant intactId="EBI-395638">
        <id>O14645</id>
        <label>DNALI1</label>
    </interactant>
    <organismsDiffer>false</organismsDiffer>
    <experiments>3</experiments>
</comment>
<comment type="interaction">
    <interactant intactId="EBI-2556915">
        <id>P13928</id>
    </interactant>
    <interactant intactId="EBI-750300">
        <id>Q01658</id>
        <label>DR1</label>
    </interactant>
    <organismsDiffer>false</organismsDiffer>
    <experiments>3</experiments>
</comment>
<comment type="interaction">
    <interactant intactId="EBI-2556915">
        <id>P13928</id>
    </interactant>
    <interactant intactId="EBI-389564">
        <id>Q00403</id>
        <label>GTF2B</label>
    </interactant>
    <organismsDiffer>false</organismsDiffer>
    <experiments>3</experiments>
</comment>
<comment type="interaction">
    <interactant intactId="EBI-2556915">
        <id>P13928</id>
    </interactant>
    <interactant intactId="EBI-1054873">
        <id>Q9Y5Q9</id>
        <label>GTF3C3</label>
    </interactant>
    <organismsDiffer>false</organismsDiffer>
    <experiments>3</experiments>
</comment>
<comment type="interaction">
    <interactant intactId="EBI-2556915">
        <id>P13928</id>
    </interactant>
    <interactant intactId="EBI-352682">
        <id>P04792</id>
        <label>HSPB1</label>
    </interactant>
    <organismsDiffer>false</organismsDiffer>
    <experiments>3</experiments>
</comment>
<comment type="interaction">
    <interactant intactId="EBI-2556915">
        <id>P13928</id>
    </interactant>
    <interactant intactId="EBI-10975473">
        <id>O60333-2</id>
        <label>KIF1B</label>
    </interactant>
    <organismsDiffer>false</organismsDiffer>
    <experiments>3</experiments>
</comment>
<comment type="interaction">
    <interactant intactId="EBI-2556915">
        <id>P13928</id>
    </interactant>
    <interactant intactId="EBI-948266">
        <id>O14901</id>
        <label>KLF11</label>
    </interactant>
    <organismsDiffer>false</organismsDiffer>
    <experiments>3</experiments>
</comment>
<comment type="interaction">
    <interactant intactId="EBI-2556915">
        <id>P13928</id>
    </interactant>
    <interactant intactId="EBI-475646">
        <id>P07196</id>
        <label>NEFL</label>
    </interactant>
    <organismsDiffer>false</organismsDiffer>
    <experiments>3</experiments>
</comment>
<comment type="interaction">
    <interactant intactId="EBI-2556915">
        <id>P13928</id>
    </interactant>
    <interactant intactId="EBI-988601">
        <id>O43933</id>
        <label>PEX1</label>
    </interactant>
    <organismsDiffer>false</organismsDiffer>
    <experiments>3</experiments>
</comment>
<comment type="interaction">
    <interactant intactId="EBI-2556915">
        <id>P13928</id>
    </interactant>
    <interactant intactId="EBI-50433196">
        <id>A0A6Q8PF08</id>
        <label>PMP22</label>
    </interactant>
    <organismsDiffer>false</organismsDiffer>
    <experiments>3</experiments>
</comment>
<comment type="interaction">
    <interactant intactId="EBI-2556915">
        <id>P13928</id>
    </interactant>
    <interactant intactId="EBI-749195">
        <id>P60891</id>
        <label>PRPS1</label>
    </interactant>
    <organismsDiffer>false</organismsDiffer>
    <experiments>3</experiments>
</comment>
<comment type="interaction">
    <interactant intactId="EBI-2556915">
        <id>P13928</id>
    </interactant>
    <interactant intactId="EBI-396669">
        <id>Q9Y3C5</id>
        <label>RNF11</label>
    </interactant>
    <organismsDiffer>false</organismsDiffer>
    <experiments>3</experiments>
</comment>
<comment type="interaction">
    <interactant intactId="EBI-2556915">
        <id>P13928</id>
    </interactant>
    <interactant intactId="EBI-990792">
        <id>P00441</id>
        <label>SOD1</label>
    </interactant>
    <organismsDiffer>false</organismsDiffer>
    <experiments>3</experiments>
</comment>
<comment type="interaction">
    <interactant intactId="EBI-2556915">
        <id>P13928</id>
    </interactant>
    <interactant intactId="EBI-372899">
        <id>Q13148</id>
        <label>TARDBP</label>
    </interactant>
    <organismsDiffer>false</organismsDiffer>
    <experiments>6</experiments>
</comment>
<comment type="interaction">
    <interactant intactId="EBI-2556915">
        <id>P13928</id>
    </interactant>
    <interactant intactId="EBI-720609">
        <id>O76024</id>
        <label>WFS1</label>
    </interactant>
    <organismsDiffer>false</organismsDiffer>
    <experiments>3</experiments>
</comment>
<comment type="alternative products">
    <event type="alternative splicing"/>
    <isoform>
        <id>P13928-1</id>
        <name>1</name>
        <sequence type="displayed"/>
    </isoform>
    <isoform>
        <id>P13928-2</id>
        <name>2</name>
        <sequence type="described" ref="VSP_056397 VSP_056398"/>
    </isoform>
    <isoform>
        <id>P13928-3</id>
        <name>3</name>
        <sequence type="described" ref="VSP_057805"/>
    </isoform>
</comment>
<comment type="domain">
    <text>A pair of annexin repeats may form one binding site for calcium and phospholipid.</text>
</comment>
<comment type="similarity">
    <text evidence="1 7">Belongs to the annexin family.</text>
</comment>